<gene>
    <name type="primary">GPR141</name>
    <name type="synonym">PGR13</name>
</gene>
<evidence type="ECO:0000255" key="1"/>
<evidence type="ECO:0000255" key="2">
    <source>
        <dbReference type="PROSITE-ProRule" id="PRU00521"/>
    </source>
</evidence>
<evidence type="ECO:0000269" key="3">
    <source>
    </source>
</evidence>
<dbReference type="EMBL" id="AY288420">
    <property type="protein sequence ID" value="AAP72129.1"/>
    <property type="molecule type" value="mRNA"/>
</dbReference>
<dbReference type="EMBL" id="CH236951">
    <property type="protein sequence ID" value="EAL23980.1"/>
    <property type="molecule type" value="Genomic_DNA"/>
</dbReference>
<dbReference type="EMBL" id="BC120951">
    <property type="protein sequence ID" value="AAI20952.1"/>
    <property type="molecule type" value="mRNA"/>
</dbReference>
<dbReference type="EMBL" id="BC120952">
    <property type="protein sequence ID" value="AAI20953.1"/>
    <property type="molecule type" value="mRNA"/>
</dbReference>
<dbReference type="EMBL" id="AY255538">
    <property type="protein sequence ID" value="AAO85050.1"/>
    <property type="molecule type" value="mRNA"/>
</dbReference>
<dbReference type="CCDS" id="CCDS5451.1"/>
<dbReference type="RefSeq" id="NP_001316922.1">
    <property type="nucleotide sequence ID" value="NM_001329993.2"/>
</dbReference>
<dbReference type="RefSeq" id="NP_001316923.1">
    <property type="nucleotide sequence ID" value="NM_001329994.2"/>
</dbReference>
<dbReference type="RefSeq" id="NP_001368875.1">
    <property type="nucleotide sequence ID" value="NM_001381946.1"/>
</dbReference>
<dbReference type="RefSeq" id="NP_861456.1">
    <property type="nucleotide sequence ID" value="NM_181791.3"/>
</dbReference>
<dbReference type="RefSeq" id="XP_011513687.1">
    <property type="nucleotide sequence ID" value="XM_011515385.3"/>
</dbReference>
<dbReference type="RefSeq" id="XP_011513688.1">
    <property type="nucleotide sequence ID" value="XM_011515386.3"/>
</dbReference>
<dbReference type="RefSeq" id="XP_011513690.1">
    <property type="nucleotide sequence ID" value="XM_011515388.3"/>
</dbReference>
<dbReference type="RefSeq" id="XP_011513691.1">
    <property type="nucleotide sequence ID" value="XM_011515389.3"/>
</dbReference>
<dbReference type="RefSeq" id="XP_016867654.1">
    <property type="nucleotide sequence ID" value="XM_017012165.1"/>
</dbReference>
<dbReference type="RefSeq" id="XP_016867655.1">
    <property type="nucleotide sequence ID" value="XM_017012166.1"/>
</dbReference>
<dbReference type="RefSeq" id="XP_047276288.1">
    <property type="nucleotide sequence ID" value="XM_047420332.1"/>
</dbReference>
<dbReference type="RefSeq" id="XP_054214115.1">
    <property type="nucleotide sequence ID" value="XM_054358140.1"/>
</dbReference>
<dbReference type="RefSeq" id="XP_054214116.1">
    <property type="nucleotide sequence ID" value="XM_054358141.1"/>
</dbReference>
<dbReference type="RefSeq" id="XP_054214117.1">
    <property type="nucleotide sequence ID" value="XM_054358142.1"/>
</dbReference>
<dbReference type="RefSeq" id="XP_054214118.1">
    <property type="nucleotide sequence ID" value="XM_054358143.1"/>
</dbReference>
<dbReference type="RefSeq" id="XP_054214119.1">
    <property type="nucleotide sequence ID" value="XM_054358144.1"/>
</dbReference>
<dbReference type="SMR" id="Q7Z602"/>
<dbReference type="BioGRID" id="131689">
    <property type="interactions" value="23"/>
</dbReference>
<dbReference type="FunCoup" id="Q7Z602">
    <property type="interactions" value="309"/>
</dbReference>
<dbReference type="IntAct" id="Q7Z602">
    <property type="interactions" value="33"/>
</dbReference>
<dbReference type="STRING" id="9606.ENSP00000390410"/>
<dbReference type="ChEMBL" id="CHEMBL4523879"/>
<dbReference type="GlyCosmos" id="Q7Z602">
    <property type="glycosylation" value="2 sites, No reported glycans"/>
</dbReference>
<dbReference type="GlyGen" id="Q7Z602">
    <property type="glycosylation" value="2 sites"/>
</dbReference>
<dbReference type="iPTMnet" id="Q7Z602"/>
<dbReference type="PhosphoSitePlus" id="Q7Z602"/>
<dbReference type="BioMuta" id="GPR141"/>
<dbReference type="DMDM" id="62900364"/>
<dbReference type="MassIVE" id="Q7Z602"/>
<dbReference type="PaxDb" id="9606-ENSP00000390410"/>
<dbReference type="PeptideAtlas" id="Q7Z602"/>
<dbReference type="Antibodypedia" id="66618">
    <property type="antibodies" value="50 antibodies from 14 providers"/>
</dbReference>
<dbReference type="DNASU" id="353345"/>
<dbReference type="Ensembl" id="ENST00000334425.2">
    <property type="protein sequence ID" value="ENSP00000334540.1"/>
    <property type="gene ID" value="ENSG00000187037.9"/>
</dbReference>
<dbReference type="Ensembl" id="ENST00000447769.1">
    <property type="protein sequence ID" value="ENSP00000390410.1"/>
    <property type="gene ID" value="ENSG00000187037.9"/>
</dbReference>
<dbReference type="GeneID" id="353345"/>
<dbReference type="KEGG" id="hsa:353345"/>
<dbReference type="MANE-Select" id="ENST00000334425.2">
    <property type="protein sequence ID" value="ENSP00000334540.1"/>
    <property type="RefSeq nucleotide sequence ID" value="NM_001381946.1"/>
    <property type="RefSeq protein sequence ID" value="NP_001368875.1"/>
</dbReference>
<dbReference type="UCSC" id="uc003tfm.1">
    <property type="organism name" value="human"/>
</dbReference>
<dbReference type="AGR" id="HGNC:19997"/>
<dbReference type="CTD" id="353345"/>
<dbReference type="DisGeNET" id="353345"/>
<dbReference type="GeneCards" id="GPR141"/>
<dbReference type="HGNC" id="HGNC:19997">
    <property type="gene designation" value="GPR141"/>
</dbReference>
<dbReference type="HPA" id="ENSG00000187037">
    <property type="expression patterns" value="Tissue enriched (bone)"/>
</dbReference>
<dbReference type="MIM" id="609045">
    <property type="type" value="gene"/>
</dbReference>
<dbReference type="neXtProt" id="NX_Q7Z602"/>
<dbReference type="OpenTargets" id="ENSG00000187037"/>
<dbReference type="PharmGKB" id="PA134923895"/>
<dbReference type="VEuPathDB" id="HostDB:ENSG00000187037"/>
<dbReference type="eggNOG" id="ENOG502RXS2">
    <property type="taxonomic scope" value="Eukaryota"/>
</dbReference>
<dbReference type="GeneTree" id="ENSGT01030000234518"/>
<dbReference type="HOGENOM" id="CLU_069285_0_0_1"/>
<dbReference type="InParanoid" id="Q7Z602"/>
<dbReference type="OMA" id="FRIYYLY"/>
<dbReference type="OrthoDB" id="9947118at2759"/>
<dbReference type="PAN-GO" id="Q7Z602">
    <property type="GO annotations" value="1 GO annotation based on evolutionary models"/>
</dbReference>
<dbReference type="PhylomeDB" id="Q7Z602"/>
<dbReference type="TreeFam" id="TF333221"/>
<dbReference type="PathwayCommons" id="Q7Z602"/>
<dbReference type="SignaLink" id="Q7Z602"/>
<dbReference type="BioGRID-ORCS" id="353345">
    <property type="hits" value="11 hits in 1146 CRISPR screens"/>
</dbReference>
<dbReference type="ChiTaRS" id="GPR141">
    <property type="organism name" value="human"/>
</dbReference>
<dbReference type="GeneWiki" id="GPR141"/>
<dbReference type="GenomeRNAi" id="353345"/>
<dbReference type="Pharos" id="Q7Z602">
    <property type="development level" value="Tdark"/>
</dbReference>
<dbReference type="PRO" id="PR:Q7Z602"/>
<dbReference type="Proteomes" id="UP000005640">
    <property type="component" value="Chromosome 7"/>
</dbReference>
<dbReference type="RNAct" id="Q7Z602">
    <property type="molecule type" value="protein"/>
</dbReference>
<dbReference type="Bgee" id="ENSG00000187037">
    <property type="expression patterns" value="Expressed in monocyte and 89 other cell types or tissues"/>
</dbReference>
<dbReference type="ExpressionAtlas" id="Q7Z602">
    <property type="expression patterns" value="baseline and differential"/>
</dbReference>
<dbReference type="GO" id="GO:0005886">
    <property type="term" value="C:plasma membrane"/>
    <property type="evidence" value="ECO:0007669"/>
    <property type="project" value="UniProtKB-SubCell"/>
</dbReference>
<dbReference type="GO" id="GO:0004930">
    <property type="term" value="F:G protein-coupled receptor activity"/>
    <property type="evidence" value="ECO:0000318"/>
    <property type="project" value="GO_Central"/>
</dbReference>
<dbReference type="GO" id="GO:0008142">
    <property type="term" value="F:oxysterol binding"/>
    <property type="evidence" value="ECO:0007669"/>
    <property type="project" value="InterPro"/>
</dbReference>
<dbReference type="GO" id="GO:0006954">
    <property type="term" value="P:inflammatory response"/>
    <property type="evidence" value="ECO:0007669"/>
    <property type="project" value="Ensembl"/>
</dbReference>
<dbReference type="FunFam" id="1.20.1070.10:FF:000250">
    <property type="entry name" value="probable G-protein coupled receptor 141"/>
    <property type="match status" value="1"/>
</dbReference>
<dbReference type="Gene3D" id="1.20.1070.10">
    <property type="entry name" value="Rhodopsin 7-helix transmembrane proteins"/>
    <property type="match status" value="1"/>
</dbReference>
<dbReference type="InterPro" id="IPR047160">
    <property type="entry name" value="GP183-like"/>
</dbReference>
<dbReference type="InterPro" id="IPR000276">
    <property type="entry name" value="GPCR_Rhodpsn"/>
</dbReference>
<dbReference type="InterPro" id="IPR017452">
    <property type="entry name" value="GPCR_Rhodpsn_7TM"/>
</dbReference>
<dbReference type="PANTHER" id="PTHR24237">
    <property type="entry name" value="G-PROTEIN COUPLED RECEPTOR"/>
    <property type="match status" value="1"/>
</dbReference>
<dbReference type="PANTHER" id="PTHR24237:SF35">
    <property type="entry name" value="G-PROTEIN COUPLED RECEPTOR 141-RELATED"/>
    <property type="match status" value="1"/>
</dbReference>
<dbReference type="Pfam" id="PF00001">
    <property type="entry name" value="7tm_1"/>
    <property type="match status" value="1"/>
</dbReference>
<dbReference type="PRINTS" id="PR00237">
    <property type="entry name" value="GPCRRHODOPSN"/>
</dbReference>
<dbReference type="SUPFAM" id="SSF81321">
    <property type="entry name" value="Family A G protein-coupled receptor-like"/>
    <property type="match status" value="1"/>
</dbReference>
<dbReference type="PROSITE" id="PS50262">
    <property type="entry name" value="G_PROTEIN_RECEP_F1_2"/>
    <property type="match status" value="1"/>
</dbReference>
<reference key="1">
    <citation type="journal article" date="2003" name="FEBS Lett.">
        <title>Seven evolutionarily conserved human rhodopsin G protein-coupled receptors lacking close relatives.</title>
        <authorList>
            <person name="Fredriksson R."/>
            <person name="Hoeglund P.J."/>
            <person name="Gloriam D.E.I."/>
            <person name="Lagerstroem M.C."/>
            <person name="Schioeth H.B."/>
        </authorList>
    </citation>
    <scope>NUCLEOTIDE SEQUENCE [MRNA]</scope>
</reference>
<reference key="2">
    <citation type="journal article" date="2003" name="Science">
        <title>Human chromosome 7: DNA sequence and biology.</title>
        <authorList>
            <person name="Scherer S.W."/>
            <person name="Cheung J."/>
            <person name="MacDonald J.R."/>
            <person name="Osborne L.R."/>
            <person name="Nakabayashi K."/>
            <person name="Herbrick J.-A."/>
            <person name="Carson A.R."/>
            <person name="Parker-Katiraee L."/>
            <person name="Skaug J."/>
            <person name="Khaja R."/>
            <person name="Zhang J."/>
            <person name="Hudek A.K."/>
            <person name="Li M."/>
            <person name="Haddad M."/>
            <person name="Duggan G.E."/>
            <person name="Fernandez B.A."/>
            <person name="Kanematsu E."/>
            <person name="Gentles S."/>
            <person name="Christopoulos C.C."/>
            <person name="Choufani S."/>
            <person name="Kwasnicka D."/>
            <person name="Zheng X.H."/>
            <person name="Lai Z."/>
            <person name="Nusskern D.R."/>
            <person name="Zhang Q."/>
            <person name="Gu Z."/>
            <person name="Lu F."/>
            <person name="Zeesman S."/>
            <person name="Nowaczyk M.J."/>
            <person name="Teshima I."/>
            <person name="Chitayat D."/>
            <person name="Shuman C."/>
            <person name="Weksberg R."/>
            <person name="Zackai E.H."/>
            <person name="Grebe T.A."/>
            <person name="Cox S.R."/>
            <person name="Kirkpatrick S.J."/>
            <person name="Rahman N."/>
            <person name="Friedman J.M."/>
            <person name="Heng H.H.Q."/>
            <person name="Pelicci P.G."/>
            <person name="Lo-Coco F."/>
            <person name="Belloni E."/>
            <person name="Shaffer L.G."/>
            <person name="Pober B."/>
            <person name="Morton C.C."/>
            <person name="Gusella J.F."/>
            <person name="Bruns G.A.P."/>
            <person name="Korf B.R."/>
            <person name="Quade B.J."/>
            <person name="Ligon A.H."/>
            <person name="Ferguson H."/>
            <person name="Higgins A.W."/>
            <person name="Leach N.T."/>
            <person name="Herrick S.R."/>
            <person name="Lemyre E."/>
            <person name="Farra C.G."/>
            <person name="Kim H.-G."/>
            <person name="Summers A.M."/>
            <person name="Gripp K.W."/>
            <person name="Roberts W."/>
            <person name="Szatmari P."/>
            <person name="Winsor E.J.T."/>
            <person name="Grzeschik K.-H."/>
            <person name="Teebi A."/>
            <person name="Minassian B.A."/>
            <person name="Kere J."/>
            <person name="Armengol L."/>
            <person name="Pujana M.A."/>
            <person name="Estivill X."/>
            <person name="Wilson M.D."/>
            <person name="Koop B.F."/>
            <person name="Tosi S."/>
            <person name="Moore G.E."/>
            <person name="Boright A.P."/>
            <person name="Zlotorynski E."/>
            <person name="Kerem B."/>
            <person name="Kroisel P.M."/>
            <person name="Petek E."/>
            <person name="Oscier D.G."/>
            <person name="Mould S.J."/>
            <person name="Doehner H."/>
            <person name="Doehner K."/>
            <person name="Rommens J.M."/>
            <person name="Vincent J.B."/>
            <person name="Venter J.C."/>
            <person name="Li P.W."/>
            <person name="Mural R.J."/>
            <person name="Adams M.D."/>
            <person name="Tsui L.-C."/>
        </authorList>
    </citation>
    <scope>NUCLEOTIDE SEQUENCE [LARGE SCALE GENOMIC DNA]</scope>
</reference>
<reference key="3">
    <citation type="journal article" date="2004" name="Genome Res.">
        <title>The status, quality, and expansion of the NIH full-length cDNA project: the Mammalian Gene Collection (MGC).</title>
        <authorList>
            <consortium name="The MGC Project Team"/>
        </authorList>
    </citation>
    <scope>NUCLEOTIDE SEQUENCE [LARGE SCALE MRNA]</scope>
</reference>
<reference key="4">
    <citation type="journal article" date="2003" name="Proc. Natl. Acad. Sci. U.S.A.">
        <title>The G protein-coupled receptor repertoires of human and mouse.</title>
        <authorList>
            <person name="Vassilatis D.K."/>
            <person name="Hohmann J.G."/>
            <person name="Zeng H."/>
            <person name="Li F."/>
            <person name="Ranchalis J.E."/>
            <person name="Mortrud M.T."/>
            <person name="Brown A."/>
            <person name="Rodriguez S.S."/>
            <person name="Weller J.R."/>
            <person name="Wright A.C."/>
            <person name="Bergmann J.E."/>
            <person name="Gaitanaris G.A."/>
        </authorList>
    </citation>
    <scope>NUCLEOTIDE SEQUENCE [LARGE SCALE MRNA] OF 68-219</scope>
</reference>
<reference key="5">
    <citation type="journal article" date="2015" name="Proc. Natl. Acad. Sci. U.S.A.">
        <title>Neomorphic effects of recurrent somatic mutations in Yin Yang 1 in insulin-producing adenomas.</title>
        <authorList>
            <person name="Cromer M.K."/>
            <person name="Choi M."/>
            <person name="Nelson-Williams C."/>
            <person name="Fonseca A.L."/>
            <person name="Kunstman J.W."/>
            <person name="Korah R.M."/>
            <person name="Overton J.D."/>
            <person name="Mane S."/>
            <person name="Kenney B."/>
            <person name="Malchoff C.D."/>
            <person name="Stalberg P."/>
            <person name="Akerstroem G."/>
            <person name="Westin G."/>
            <person name="Hellman P."/>
            <person name="Carling T."/>
            <person name="Bjoerklund P."/>
            <person name="Lifton R.P."/>
        </authorList>
    </citation>
    <scope>VARIANT HIS-72</scope>
</reference>
<sequence>MPGHNTSRNSSCDPIVTPHLISLYFIVLIGGLVGVISILFLLVKMNTRSVTTMAVINLVVVHSVFLLTVPFRLTYLIKKTWMFGLPFCKFVSAMLHIHMYLTFLFYVVILVTRYLIFFKCKDKVEFYRKLHAVAASAGMWTLVIVIVVPLVVSRYGIHEEYNEEHCFKFHKELAYTYVKIINYMIVIFVIAVAVILLVFQVFIIMLMVQKLRHSLLSHQEFWAQLKNLFFIGVILVCFLPYQFFRIYYLNVVTHSNACNSKVAFYNEIFLSVTAISCYDLLLFVFGGSHWFKQKIIGLWNCVLCR</sequence>
<feature type="chain" id="PRO_0000069618" description="Probable G-protein coupled receptor 141">
    <location>
        <begin position="1"/>
        <end position="305"/>
    </location>
</feature>
<feature type="topological domain" description="Extracellular" evidence="1">
    <location>
        <begin position="1"/>
        <end position="22"/>
    </location>
</feature>
<feature type="transmembrane region" description="Helical; Name=1" evidence="1">
    <location>
        <begin position="23"/>
        <end position="43"/>
    </location>
</feature>
<feature type="topological domain" description="Cytoplasmic" evidence="1">
    <location>
        <begin position="44"/>
        <end position="50"/>
    </location>
</feature>
<feature type="transmembrane region" description="Helical; Name=2" evidence="1">
    <location>
        <begin position="51"/>
        <end position="71"/>
    </location>
</feature>
<feature type="topological domain" description="Extracellular" evidence="1">
    <location>
        <begin position="72"/>
        <end position="89"/>
    </location>
</feature>
<feature type="transmembrane region" description="Helical; Name=3" evidence="1">
    <location>
        <begin position="90"/>
        <end position="110"/>
    </location>
</feature>
<feature type="topological domain" description="Cytoplasmic" evidence="1">
    <location>
        <begin position="111"/>
        <end position="131"/>
    </location>
</feature>
<feature type="transmembrane region" description="Helical; Name=4" evidence="1">
    <location>
        <begin position="132"/>
        <end position="152"/>
    </location>
</feature>
<feature type="topological domain" description="Extracellular" evidence="1">
    <location>
        <begin position="153"/>
        <end position="183"/>
    </location>
</feature>
<feature type="transmembrane region" description="Helical; Name=5" evidence="1">
    <location>
        <begin position="184"/>
        <end position="204"/>
    </location>
</feature>
<feature type="topological domain" description="Cytoplasmic" evidence="1">
    <location>
        <begin position="205"/>
        <end position="227"/>
    </location>
</feature>
<feature type="transmembrane region" description="Helical; Name=6" evidence="1">
    <location>
        <begin position="228"/>
        <end position="248"/>
    </location>
</feature>
<feature type="topological domain" description="Extracellular" evidence="1">
    <location>
        <begin position="249"/>
        <end position="267"/>
    </location>
</feature>
<feature type="transmembrane region" description="Helical; Name=7" evidence="1">
    <location>
        <begin position="268"/>
        <end position="288"/>
    </location>
</feature>
<feature type="topological domain" description="Cytoplasmic" evidence="1">
    <location>
        <begin position="289"/>
        <end position="305"/>
    </location>
</feature>
<feature type="glycosylation site" description="N-linked (GlcNAc...) asparagine" evidence="1">
    <location>
        <position position="5"/>
    </location>
</feature>
<feature type="glycosylation site" description="N-linked (GlcNAc...) asparagine" evidence="1">
    <location>
        <position position="9"/>
    </location>
</feature>
<feature type="sequence variant" id="VAR_074185" description="In dbSNP:rs772202718." evidence="3">
    <original>R</original>
    <variation>H</variation>
    <location>
        <position position="72"/>
    </location>
</feature>
<protein>
    <recommendedName>
        <fullName>Probable G-protein coupled receptor 141</fullName>
    </recommendedName>
    <alternativeName>
        <fullName>G-protein coupled receptor PGR13</fullName>
    </alternativeName>
</protein>
<name>GP141_HUMAN</name>
<keyword id="KW-1003">Cell membrane</keyword>
<keyword id="KW-0297">G-protein coupled receptor</keyword>
<keyword id="KW-0325">Glycoprotein</keyword>
<keyword id="KW-0472">Membrane</keyword>
<keyword id="KW-1267">Proteomics identification</keyword>
<keyword id="KW-0675">Receptor</keyword>
<keyword id="KW-1185">Reference proteome</keyword>
<keyword id="KW-0807">Transducer</keyword>
<keyword id="KW-0812">Transmembrane</keyword>
<keyword id="KW-1133">Transmembrane helix</keyword>
<organism>
    <name type="scientific">Homo sapiens</name>
    <name type="common">Human</name>
    <dbReference type="NCBI Taxonomy" id="9606"/>
    <lineage>
        <taxon>Eukaryota</taxon>
        <taxon>Metazoa</taxon>
        <taxon>Chordata</taxon>
        <taxon>Craniata</taxon>
        <taxon>Vertebrata</taxon>
        <taxon>Euteleostomi</taxon>
        <taxon>Mammalia</taxon>
        <taxon>Eutheria</taxon>
        <taxon>Euarchontoglires</taxon>
        <taxon>Primates</taxon>
        <taxon>Haplorrhini</taxon>
        <taxon>Catarrhini</taxon>
        <taxon>Hominidae</taxon>
        <taxon>Homo</taxon>
    </lineage>
</organism>
<comment type="function">
    <text>Orphan receptor.</text>
</comment>
<comment type="interaction">
    <interactant intactId="EBI-21649723">
        <id>Q7Z602</id>
    </interactant>
    <interactant intactId="EBI-2115097">
        <id>P07339</id>
        <label>CTSD</label>
    </interactant>
    <organismsDiffer>false</organismsDiffer>
    <experiments>3</experiments>
</comment>
<comment type="interaction">
    <interactant intactId="EBI-21649723">
        <id>Q7Z602</id>
    </interactant>
    <interactant intactId="EBI-10976677">
        <id>G5E9A7</id>
        <label>DMWD</label>
    </interactant>
    <organismsDiffer>false</organismsDiffer>
    <experiments>3</experiments>
</comment>
<comment type="interaction">
    <interactant intactId="EBI-21649723">
        <id>Q7Z602</id>
    </interactant>
    <interactant intactId="EBI-747754">
        <id>P28799</id>
        <label>GRN</label>
    </interactant>
    <organismsDiffer>false</organismsDiffer>
    <experiments>3</experiments>
</comment>
<comment type="interaction">
    <interactant intactId="EBI-21649723">
        <id>Q7Z602</id>
    </interactant>
    <interactant intactId="EBI-352682">
        <id>P04792</id>
        <label>HSPB1</label>
    </interactant>
    <organismsDiffer>false</organismsDiffer>
    <experiments>3</experiments>
</comment>
<comment type="interaction">
    <interactant intactId="EBI-21649723">
        <id>Q7Z602</id>
    </interactant>
    <interactant intactId="EBI-466029">
        <id>P42858</id>
        <label>HTT</label>
    </interactant>
    <organismsDiffer>false</organismsDiffer>
    <experiments>3</experiments>
</comment>
<comment type="interaction">
    <interactant intactId="EBI-21649723">
        <id>Q7Z602</id>
    </interactant>
    <interactant intactId="EBI-10975473">
        <id>O60333-2</id>
        <label>KIF1B</label>
    </interactant>
    <organismsDiffer>false</organismsDiffer>
    <experiments>3</experiments>
</comment>
<comment type="interaction">
    <interactant intactId="EBI-21649723">
        <id>Q7Z602</id>
    </interactant>
    <interactant intactId="EBI-50433196">
        <id>A0A6Q8PF08</id>
        <label>PMP22</label>
    </interactant>
    <organismsDiffer>false</organismsDiffer>
    <experiments>3</experiments>
</comment>
<comment type="interaction">
    <interactant intactId="EBI-21649723">
        <id>Q7Z602</id>
    </interactant>
    <interactant intactId="EBI-21251460">
        <id>O60260-5</id>
        <label>PRKN</label>
    </interactant>
    <organismsDiffer>false</organismsDiffer>
    <experiments>3</experiments>
</comment>
<comment type="interaction">
    <interactant intactId="EBI-21649723">
        <id>Q7Z602</id>
    </interactant>
    <interactant intactId="EBI-396669">
        <id>Q9Y3C5</id>
        <label>RNF11</label>
    </interactant>
    <organismsDiffer>false</organismsDiffer>
    <experiments>3</experiments>
</comment>
<comment type="interaction">
    <interactant intactId="EBI-21649723">
        <id>Q7Z602</id>
    </interactant>
    <interactant intactId="EBI-5235340">
        <id>Q7Z699</id>
        <label>SPRED1</label>
    </interactant>
    <organismsDiffer>false</organismsDiffer>
    <experiments>3</experiments>
</comment>
<comment type="interaction">
    <interactant intactId="EBI-21649723">
        <id>Q7Z602</id>
    </interactant>
    <interactant intactId="EBI-711909">
        <id>P02766</id>
        <label>TTR</label>
    </interactant>
    <organismsDiffer>false</organismsDiffer>
    <experiments>3</experiments>
</comment>
<comment type="interaction">
    <interactant intactId="EBI-21649723">
        <id>Q7Z602</id>
    </interactant>
    <interactant intactId="EBI-720609">
        <id>O76024</id>
        <label>WFS1</label>
    </interactant>
    <organismsDiffer>false</organismsDiffer>
    <experiments>3</experiments>
</comment>
<comment type="subcellular location">
    <subcellularLocation>
        <location>Cell membrane</location>
        <topology>Multi-pass membrane protein</topology>
    </subcellularLocation>
</comment>
<comment type="similarity">
    <text evidence="2">Belongs to the G-protein coupled receptor 1 family.</text>
</comment>
<proteinExistence type="evidence at protein level"/>
<accession>Q7Z602</accession>
<accession>A4D1X7</accession>
<accession>Q0VAR5</accession>
<accession>Q86SP3</accession>